<dbReference type="EMBL" id="EU163896">
    <property type="protein sequence ID" value="ABY26705.1"/>
    <property type="molecule type" value="mRNA"/>
</dbReference>
<dbReference type="SMR" id="D9U2B8"/>
<dbReference type="GO" id="GO:0005576">
    <property type="term" value="C:extracellular region"/>
    <property type="evidence" value="ECO:0007669"/>
    <property type="project" value="UniProtKB-SubCell"/>
</dbReference>
<dbReference type="GO" id="GO:0016020">
    <property type="term" value="C:membrane"/>
    <property type="evidence" value="ECO:0007669"/>
    <property type="project" value="UniProtKB-KW"/>
</dbReference>
<dbReference type="GO" id="GO:0044218">
    <property type="term" value="C:other organism cell membrane"/>
    <property type="evidence" value="ECO:0007669"/>
    <property type="project" value="UniProtKB-KW"/>
</dbReference>
<dbReference type="GO" id="GO:0042742">
    <property type="term" value="P:defense response to bacterium"/>
    <property type="evidence" value="ECO:0007669"/>
    <property type="project" value="UniProtKB-KW"/>
</dbReference>
<keyword id="KW-0027">Amidation</keyword>
<keyword id="KW-0044">Antibiotic</keyword>
<keyword id="KW-0929">Antimicrobial</keyword>
<keyword id="KW-0165">Cleavage on pair of basic residues</keyword>
<keyword id="KW-0472">Membrane</keyword>
<keyword id="KW-0964">Secreted</keyword>
<keyword id="KW-0732">Signal</keyword>
<keyword id="KW-1052">Target cell membrane</keyword>
<keyword id="KW-1053">Target membrane</keyword>
<keyword id="KW-0812">Transmembrane</keyword>
<comment type="function">
    <text evidence="1">Cationic host defense peptide that have antibacterial activity by breaking membranes. Is more effective on Gram-positive than on Gram-negative bacteria.</text>
</comment>
<comment type="subcellular location">
    <subcellularLocation>
        <location evidence="1">Secreted</location>
    </subcellularLocation>
    <subcellularLocation>
        <location evidence="1">Target cell membrane</location>
    </subcellularLocation>
    <text evidence="1">Forms a helical membrane channel in the prey.</text>
</comment>
<comment type="tissue specificity">
    <text>Expressed by the venom gland.</text>
</comment>
<comment type="similarity">
    <text evidence="3">Belongs to the non-disulfide-bridged peptide (NDBP) superfamily. Short antimicrobial peptide (group 4) family.</text>
</comment>
<sequence length="73" mass="8500">MKVKCLLAVFLIVLIAAEHCQALFFLPSLIGGLISAFKGRRKRELGTQFQPRQKNFMRREVDLERLFAEMPDY</sequence>
<organism>
    <name type="scientific">Lychas mucronatus</name>
    <name type="common">Chinese swimming scorpion</name>
    <dbReference type="NCBI Taxonomy" id="172552"/>
    <lineage>
        <taxon>Eukaryota</taxon>
        <taxon>Metazoa</taxon>
        <taxon>Ecdysozoa</taxon>
        <taxon>Arthropoda</taxon>
        <taxon>Chelicerata</taxon>
        <taxon>Arachnida</taxon>
        <taxon>Scorpiones</taxon>
        <taxon>Buthida</taxon>
        <taxon>Buthoidea</taxon>
        <taxon>Buthidae</taxon>
        <taxon>Lychas</taxon>
    </lineage>
</organism>
<name>NDB4S_LYCMC</name>
<evidence type="ECO:0000250" key="1"/>
<evidence type="ECO:0000255" key="2"/>
<evidence type="ECO:0000305" key="3"/>
<feature type="signal peptide" evidence="2">
    <location>
        <begin position="1"/>
        <end position="22"/>
    </location>
</feature>
<feature type="peptide" id="PRO_0000403864" description="Mucroporin-like peptide">
    <location>
        <begin position="23"/>
        <end position="38"/>
    </location>
</feature>
<feature type="propeptide" id="PRO_0000403865" evidence="1">
    <location>
        <begin position="44"/>
        <end position="73"/>
    </location>
</feature>
<feature type="modified residue" description="Lysine amide" evidence="1">
    <location>
        <position position="38"/>
    </location>
</feature>
<proteinExistence type="evidence at transcript level"/>
<protein>
    <recommendedName>
        <fullName>Mucroporin-like peptide</fullName>
    </recommendedName>
    <alternativeName>
        <fullName>NDBP13</fullName>
    </alternativeName>
</protein>
<accession>D9U2B8</accession>
<reference key="1">
    <citation type="journal article" date="2010" name="BMC Genomics">
        <title>Comparative venom gland transcriptome analysis of the scorpion Lychas mucronatus reveals intraspecific toxic gene diversity and new venomous components.</title>
        <authorList>
            <person name="Zhao R."/>
            <person name="Ma Y."/>
            <person name="He Y."/>
            <person name="Di Z."/>
            <person name="Wu Y.-L."/>
            <person name="Cao Z.-J."/>
            <person name="Li W.-X."/>
        </authorList>
    </citation>
    <scope>NUCLEOTIDE SEQUENCE [MRNA]</scope>
    <source>
        <strain>Hainan</strain>
        <tissue>Venom gland</tissue>
    </source>
</reference>